<organism>
    <name type="scientific">Eremothecium gossypii (strain ATCC 10895 / CBS 109.51 / FGSC 9923 / NRRL Y-1056)</name>
    <name type="common">Yeast</name>
    <name type="synonym">Ashbya gossypii</name>
    <dbReference type="NCBI Taxonomy" id="284811"/>
    <lineage>
        <taxon>Eukaryota</taxon>
        <taxon>Fungi</taxon>
        <taxon>Dikarya</taxon>
        <taxon>Ascomycota</taxon>
        <taxon>Saccharomycotina</taxon>
        <taxon>Saccharomycetes</taxon>
        <taxon>Saccharomycetales</taxon>
        <taxon>Saccharomycetaceae</taxon>
        <taxon>Eremothecium</taxon>
    </lineage>
</organism>
<protein>
    <recommendedName>
        <fullName>Chromatin modification-related protein YNG2</fullName>
    </recommendedName>
    <alternativeName>
        <fullName>ING1 homolog 2</fullName>
    </alternativeName>
</protein>
<gene>
    <name type="primary">YNG2</name>
    <name type="ordered locus">AEL100W</name>
</gene>
<evidence type="ECO:0000250" key="1"/>
<evidence type="ECO:0000250" key="2">
    <source>
        <dbReference type="UniProtKB" id="Q9UK53"/>
    </source>
</evidence>
<evidence type="ECO:0000255" key="3"/>
<evidence type="ECO:0000255" key="4">
    <source>
        <dbReference type="PROSITE-ProRule" id="PRU00146"/>
    </source>
</evidence>
<evidence type="ECO:0000256" key="5">
    <source>
        <dbReference type="SAM" id="MobiDB-lite"/>
    </source>
</evidence>
<evidence type="ECO:0000305" key="6"/>
<sequence>MSFERPQDPSSALEQATQDVSNLKSESRFLLEEIRASDLEFYESKKRFLNKDTQIHKFIKQHGSLVDNPKEAEFQERIKEDLERCHQLQVDKCTVANSLLYMVTKHLKKVQANIEALEEDGLLAPLEDDAVELANELSRESSVLSSGTSLERRKRTVAAGTLSAGSSLRKRVKKERGRSTQRDGMLSEPPSDEASSHGANFADDLQDFNDELFSLNQQEEDDKQLYCFCQSVSYGEMVACDGPNCKYEWFHYGCVNLDEPPKGQWYCPECRQEMANLKLKKKKRV</sequence>
<name>YNG2_EREGS</name>
<dbReference type="EMBL" id="AE016818">
    <property type="protein sequence ID" value="AAS52585.1"/>
    <property type="molecule type" value="Genomic_DNA"/>
</dbReference>
<dbReference type="RefSeq" id="NP_984761.1">
    <property type="nucleotide sequence ID" value="NM_210115.1"/>
</dbReference>
<dbReference type="SMR" id="Q757W2"/>
<dbReference type="FunCoup" id="Q757W2">
    <property type="interactions" value="327"/>
</dbReference>
<dbReference type="STRING" id="284811.Q757W2"/>
<dbReference type="EnsemblFungi" id="AAS52585">
    <property type="protein sequence ID" value="AAS52585"/>
    <property type="gene ID" value="AGOS_AEL100W"/>
</dbReference>
<dbReference type="GeneID" id="4620951"/>
<dbReference type="KEGG" id="ago:AGOS_AEL100W"/>
<dbReference type="eggNOG" id="KOG1973">
    <property type="taxonomic scope" value="Eukaryota"/>
</dbReference>
<dbReference type="HOGENOM" id="CLU_031900_2_0_1"/>
<dbReference type="InParanoid" id="Q757W2"/>
<dbReference type="OMA" id="GPNCKYE"/>
<dbReference type="OrthoDB" id="5411773at2759"/>
<dbReference type="Proteomes" id="UP000000591">
    <property type="component" value="Chromosome V"/>
</dbReference>
<dbReference type="GO" id="GO:0005829">
    <property type="term" value="C:cytosol"/>
    <property type="evidence" value="ECO:0007669"/>
    <property type="project" value="EnsemblFungi"/>
</dbReference>
<dbReference type="GO" id="GO:0035267">
    <property type="term" value="C:NuA4 histone acetyltransferase complex"/>
    <property type="evidence" value="ECO:0000318"/>
    <property type="project" value="GO_Central"/>
</dbReference>
<dbReference type="GO" id="GO:0000786">
    <property type="term" value="C:nucleosome"/>
    <property type="evidence" value="ECO:0007669"/>
    <property type="project" value="EnsemblFungi"/>
</dbReference>
<dbReference type="GO" id="GO:0005634">
    <property type="term" value="C:nucleus"/>
    <property type="evidence" value="ECO:0000318"/>
    <property type="project" value="GO_Central"/>
</dbReference>
<dbReference type="GO" id="GO:0032777">
    <property type="term" value="C:piccolo histone acetyltransferase complex"/>
    <property type="evidence" value="ECO:0007669"/>
    <property type="project" value="EnsemblFungi"/>
</dbReference>
<dbReference type="GO" id="GO:0004402">
    <property type="term" value="F:histone acetyltransferase activity"/>
    <property type="evidence" value="ECO:0007669"/>
    <property type="project" value="EnsemblFungi"/>
</dbReference>
<dbReference type="GO" id="GO:0140002">
    <property type="term" value="F:histone H3K4me3 reader activity"/>
    <property type="evidence" value="ECO:0007669"/>
    <property type="project" value="EnsemblFungi"/>
</dbReference>
<dbReference type="GO" id="GO:0035064">
    <property type="term" value="F:methylated histone binding"/>
    <property type="evidence" value="ECO:0000318"/>
    <property type="project" value="GO_Central"/>
</dbReference>
<dbReference type="GO" id="GO:0008270">
    <property type="term" value="F:zinc ion binding"/>
    <property type="evidence" value="ECO:0007669"/>
    <property type="project" value="UniProtKB-KW"/>
</dbReference>
<dbReference type="GO" id="GO:0006281">
    <property type="term" value="P:DNA repair"/>
    <property type="evidence" value="ECO:0007669"/>
    <property type="project" value="UniProtKB-KW"/>
</dbReference>
<dbReference type="GO" id="GO:0051321">
    <property type="term" value="P:meiotic cell cycle"/>
    <property type="evidence" value="ECO:0007669"/>
    <property type="project" value="UniProtKB-KW"/>
</dbReference>
<dbReference type="GO" id="GO:0006355">
    <property type="term" value="P:regulation of DNA-templated transcription"/>
    <property type="evidence" value="ECO:0000318"/>
    <property type="project" value="GO_Central"/>
</dbReference>
<dbReference type="CDD" id="cd16858">
    <property type="entry name" value="ING_ING3_Yng2p"/>
    <property type="match status" value="1"/>
</dbReference>
<dbReference type="CDD" id="cd15505">
    <property type="entry name" value="PHD_ING"/>
    <property type="match status" value="1"/>
</dbReference>
<dbReference type="FunFam" id="3.30.40.10:FF:000436">
    <property type="entry name" value="Chromatin modification-related protein"/>
    <property type="match status" value="1"/>
</dbReference>
<dbReference type="Gene3D" id="6.10.140.1740">
    <property type="match status" value="1"/>
</dbReference>
<dbReference type="Gene3D" id="3.30.40.10">
    <property type="entry name" value="Zinc/RING finger domain, C3HC4 (zinc finger)"/>
    <property type="match status" value="1"/>
</dbReference>
<dbReference type="InterPro" id="IPR028651">
    <property type="entry name" value="ING_fam"/>
</dbReference>
<dbReference type="InterPro" id="IPR024610">
    <property type="entry name" value="ING_N_histone-binding"/>
</dbReference>
<dbReference type="InterPro" id="IPR019786">
    <property type="entry name" value="Zinc_finger_PHD-type_CS"/>
</dbReference>
<dbReference type="InterPro" id="IPR011011">
    <property type="entry name" value="Znf_FYVE_PHD"/>
</dbReference>
<dbReference type="InterPro" id="IPR001965">
    <property type="entry name" value="Znf_PHD"/>
</dbReference>
<dbReference type="InterPro" id="IPR019787">
    <property type="entry name" value="Znf_PHD-finger"/>
</dbReference>
<dbReference type="InterPro" id="IPR013083">
    <property type="entry name" value="Znf_RING/FYVE/PHD"/>
</dbReference>
<dbReference type="PANTHER" id="PTHR10333:SF100">
    <property type="entry name" value="CHROMATIN MODIFICATION-RELATED PROTEIN YNG2"/>
    <property type="match status" value="1"/>
</dbReference>
<dbReference type="PANTHER" id="PTHR10333">
    <property type="entry name" value="INHIBITOR OF GROWTH PROTEIN"/>
    <property type="match status" value="1"/>
</dbReference>
<dbReference type="Pfam" id="PF12998">
    <property type="entry name" value="ING"/>
    <property type="match status" value="1"/>
</dbReference>
<dbReference type="SMART" id="SM01408">
    <property type="entry name" value="ING"/>
    <property type="match status" value="1"/>
</dbReference>
<dbReference type="SMART" id="SM00249">
    <property type="entry name" value="PHD"/>
    <property type="match status" value="1"/>
</dbReference>
<dbReference type="SUPFAM" id="SSF57903">
    <property type="entry name" value="FYVE/PHD zinc finger"/>
    <property type="match status" value="1"/>
</dbReference>
<dbReference type="PROSITE" id="PS01359">
    <property type="entry name" value="ZF_PHD_1"/>
    <property type="match status" value="1"/>
</dbReference>
<dbReference type="PROSITE" id="PS50016">
    <property type="entry name" value="ZF_PHD_2"/>
    <property type="match status" value="1"/>
</dbReference>
<accession>Q757W2</accession>
<keyword id="KW-0131">Cell cycle</keyword>
<keyword id="KW-0156">Chromatin regulator</keyword>
<keyword id="KW-0175">Coiled coil</keyword>
<keyword id="KW-0227">DNA damage</keyword>
<keyword id="KW-0234">DNA repair</keyword>
<keyword id="KW-0469">Meiosis</keyword>
<keyword id="KW-0479">Metal-binding</keyword>
<keyword id="KW-0539">Nucleus</keyword>
<keyword id="KW-1185">Reference proteome</keyword>
<keyword id="KW-0862">Zinc</keyword>
<keyword id="KW-0863">Zinc-finger</keyword>
<comment type="function">
    <text evidence="1">Component of the NuA4 histone acetyltransferase complex which is involved in transcriptional activation of selected genes principally by acetylation of nucleosomal histone H4 and H2A. The NuA4 complex is also involved in DNA repair. Involved in cell cycle progression and meiosis (By similarity).</text>
</comment>
<comment type="subunit">
    <text evidence="1">Interacts with H3K4me3 and to a lesser extent with H3K4me2. Component of the NuA4 histone acetyltransferase complex.</text>
</comment>
<comment type="subcellular location">
    <subcellularLocation>
        <location evidence="1">Nucleus</location>
    </subcellularLocation>
</comment>
<comment type="domain">
    <text evidence="1">The PHD-type zinc finger mediates the binding to H3K4me3.</text>
</comment>
<comment type="similarity">
    <text evidence="6">Belongs to the ING family.</text>
</comment>
<reference key="1">
    <citation type="journal article" date="2004" name="Science">
        <title>The Ashbya gossypii genome as a tool for mapping the ancient Saccharomyces cerevisiae genome.</title>
        <authorList>
            <person name="Dietrich F.S."/>
            <person name="Voegeli S."/>
            <person name="Brachat S."/>
            <person name="Lerch A."/>
            <person name="Gates K."/>
            <person name="Steiner S."/>
            <person name="Mohr C."/>
            <person name="Poehlmann R."/>
            <person name="Luedi P."/>
            <person name="Choi S."/>
            <person name="Wing R.A."/>
            <person name="Flavier A."/>
            <person name="Gaffney T.D."/>
            <person name="Philippsen P."/>
        </authorList>
    </citation>
    <scope>NUCLEOTIDE SEQUENCE [LARGE SCALE GENOMIC DNA]</scope>
    <source>
        <strain>ATCC 10895 / CBS 109.51 / FGSC 9923 / NRRL Y-1056</strain>
    </source>
</reference>
<reference key="2">
    <citation type="journal article" date="2013" name="G3 (Bethesda)">
        <title>Genomes of Ashbya fungi isolated from insects reveal four mating-type loci, numerous translocations, lack of transposons, and distinct gene duplications.</title>
        <authorList>
            <person name="Dietrich F.S."/>
            <person name="Voegeli S."/>
            <person name="Kuo S."/>
            <person name="Philippsen P."/>
        </authorList>
    </citation>
    <scope>GENOME REANNOTATION</scope>
    <source>
        <strain>ATCC 10895 / CBS 109.51 / FGSC 9923 / NRRL Y-1056</strain>
    </source>
</reference>
<feature type="chain" id="PRO_0000212673" description="Chromatin modification-related protein YNG2">
    <location>
        <begin position="1"/>
        <end position="285"/>
    </location>
</feature>
<feature type="zinc finger region" description="PHD-type" evidence="4">
    <location>
        <begin position="224"/>
        <end position="273"/>
    </location>
</feature>
<feature type="region of interest" description="Disordered" evidence="5">
    <location>
        <begin position="1"/>
        <end position="24"/>
    </location>
</feature>
<feature type="region of interest" description="Disordered" evidence="5">
    <location>
        <begin position="155"/>
        <end position="201"/>
    </location>
</feature>
<feature type="coiled-coil region" evidence="3">
    <location>
        <begin position="10"/>
        <end position="36"/>
    </location>
</feature>
<feature type="compositionally biased region" description="Polar residues" evidence="5">
    <location>
        <begin position="8"/>
        <end position="24"/>
    </location>
</feature>
<feature type="binding site" evidence="2">
    <location>
        <position position="227"/>
    </location>
    <ligand>
        <name>Zn(2+)</name>
        <dbReference type="ChEBI" id="CHEBI:29105"/>
        <label>1</label>
    </ligand>
</feature>
<feature type="binding site" evidence="2">
    <location>
        <position position="229"/>
    </location>
    <ligand>
        <name>Zn(2+)</name>
        <dbReference type="ChEBI" id="CHEBI:29105"/>
        <label>1</label>
    </ligand>
</feature>
<feature type="binding site" evidence="2">
    <location>
        <position position="240"/>
    </location>
    <ligand>
        <name>Zn(2+)</name>
        <dbReference type="ChEBI" id="CHEBI:29105"/>
        <label>2</label>
    </ligand>
</feature>
<feature type="binding site" evidence="2">
    <location>
        <position position="245"/>
    </location>
    <ligand>
        <name>Zn(2+)</name>
        <dbReference type="ChEBI" id="CHEBI:29105"/>
        <label>2</label>
    </ligand>
</feature>
<feature type="binding site" evidence="2">
    <location>
        <position position="251"/>
    </location>
    <ligand>
        <name>Zn(2+)</name>
        <dbReference type="ChEBI" id="CHEBI:29105"/>
        <label>1</label>
    </ligand>
</feature>
<feature type="binding site" evidence="2">
    <location>
        <position position="254"/>
    </location>
    <ligand>
        <name>Zn(2+)</name>
        <dbReference type="ChEBI" id="CHEBI:29105"/>
        <label>1</label>
    </ligand>
</feature>
<feature type="binding site" evidence="2">
    <location>
        <position position="267"/>
    </location>
    <ligand>
        <name>Zn(2+)</name>
        <dbReference type="ChEBI" id="CHEBI:29105"/>
        <label>2</label>
    </ligand>
</feature>
<feature type="binding site" evidence="2">
    <location>
        <position position="270"/>
    </location>
    <ligand>
        <name>Zn(2+)</name>
        <dbReference type="ChEBI" id="CHEBI:29105"/>
        <label>2</label>
    </ligand>
</feature>
<feature type="site" description="Histone H3K4me3 binding" evidence="2">
    <location>
        <position position="226"/>
    </location>
</feature>
<feature type="site" description="Histone H3K4me3 binding" evidence="2">
    <location>
        <position position="237"/>
    </location>
</feature>
<feature type="site" description="Histone H3K4me3 binding" evidence="2">
    <location>
        <position position="241"/>
    </location>
</feature>
<feature type="site" description="Histone H3K4me3 binding" evidence="2">
    <location>
        <position position="249"/>
    </location>
</feature>
<proteinExistence type="inferred from homology"/>